<gene>
    <name evidence="1" type="primary">rlmD</name>
    <name type="synonym">rumA</name>
    <name type="ordered locus">BPP3051</name>
</gene>
<name>RLMD_BORPA</name>
<protein>
    <recommendedName>
        <fullName evidence="1">23S rRNA (uracil(1939)-C(5))-methyltransferase RlmD</fullName>
        <ecNumber evidence="1">2.1.1.190</ecNumber>
    </recommendedName>
    <alternativeName>
        <fullName evidence="1">23S rRNA(m5U1939)-methyltransferase</fullName>
    </alternativeName>
</protein>
<evidence type="ECO:0000255" key="1">
    <source>
        <dbReference type="HAMAP-Rule" id="MF_01010"/>
    </source>
</evidence>
<evidence type="ECO:0000305" key="2"/>
<reference key="1">
    <citation type="journal article" date="2003" name="Nat. Genet.">
        <title>Comparative analysis of the genome sequences of Bordetella pertussis, Bordetella parapertussis and Bordetella bronchiseptica.</title>
        <authorList>
            <person name="Parkhill J."/>
            <person name="Sebaihia M."/>
            <person name="Preston A."/>
            <person name="Murphy L.D."/>
            <person name="Thomson N.R."/>
            <person name="Harris D.E."/>
            <person name="Holden M.T.G."/>
            <person name="Churcher C.M."/>
            <person name="Bentley S.D."/>
            <person name="Mungall K.L."/>
            <person name="Cerdeno-Tarraga A.-M."/>
            <person name="Temple L."/>
            <person name="James K.D."/>
            <person name="Harris B."/>
            <person name="Quail M.A."/>
            <person name="Achtman M."/>
            <person name="Atkin R."/>
            <person name="Baker S."/>
            <person name="Basham D."/>
            <person name="Bason N."/>
            <person name="Cherevach I."/>
            <person name="Chillingworth T."/>
            <person name="Collins M."/>
            <person name="Cronin A."/>
            <person name="Davis P."/>
            <person name="Doggett J."/>
            <person name="Feltwell T."/>
            <person name="Goble A."/>
            <person name="Hamlin N."/>
            <person name="Hauser H."/>
            <person name="Holroyd S."/>
            <person name="Jagels K."/>
            <person name="Leather S."/>
            <person name="Moule S."/>
            <person name="Norberczak H."/>
            <person name="O'Neil S."/>
            <person name="Ormond D."/>
            <person name="Price C."/>
            <person name="Rabbinowitsch E."/>
            <person name="Rutter S."/>
            <person name="Sanders M."/>
            <person name="Saunders D."/>
            <person name="Seeger K."/>
            <person name="Sharp S."/>
            <person name="Simmonds M."/>
            <person name="Skelton J."/>
            <person name="Squares R."/>
            <person name="Squares S."/>
            <person name="Stevens K."/>
            <person name="Unwin L."/>
            <person name="Whitehead S."/>
            <person name="Barrell B.G."/>
            <person name="Maskell D.J."/>
        </authorList>
    </citation>
    <scope>NUCLEOTIDE SEQUENCE [LARGE SCALE GENOMIC DNA]</scope>
    <source>
        <strain>12822 / ATCC BAA-587 / NCTC 13253</strain>
    </source>
</reference>
<feature type="chain" id="PRO_0000161888" description="23S rRNA (uracil(1939)-C(5))-methyltransferase RlmD">
    <location>
        <begin position="1"/>
        <end position="466"/>
    </location>
</feature>
<feature type="domain" description="TRAM" evidence="1">
    <location>
        <begin position="1"/>
        <end position="54"/>
    </location>
</feature>
<feature type="active site" description="Nucleophile" evidence="1">
    <location>
        <position position="393"/>
    </location>
</feature>
<feature type="binding site" evidence="1">
    <location>
        <position position="67"/>
    </location>
    <ligand>
        <name>[4Fe-4S] cluster</name>
        <dbReference type="ChEBI" id="CHEBI:49883"/>
    </ligand>
</feature>
<feature type="binding site" evidence="1">
    <location>
        <position position="73"/>
    </location>
    <ligand>
        <name>[4Fe-4S] cluster</name>
        <dbReference type="ChEBI" id="CHEBI:49883"/>
    </ligand>
</feature>
<feature type="binding site" evidence="1">
    <location>
        <position position="76"/>
    </location>
    <ligand>
        <name>[4Fe-4S] cluster</name>
        <dbReference type="ChEBI" id="CHEBI:49883"/>
    </ligand>
</feature>
<feature type="binding site" evidence="1">
    <location>
        <position position="155"/>
    </location>
    <ligand>
        <name>[4Fe-4S] cluster</name>
        <dbReference type="ChEBI" id="CHEBI:49883"/>
    </ligand>
</feature>
<feature type="binding site" evidence="1">
    <location>
        <position position="264"/>
    </location>
    <ligand>
        <name>S-adenosyl-L-methionine</name>
        <dbReference type="ChEBI" id="CHEBI:59789"/>
    </ligand>
</feature>
<feature type="binding site" evidence="1">
    <location>
        <position position="293"/>
    </location>
    <ligand>
        <name>S-adenosyl-L-methionine</name>
        <dbReference type="ChEBI" id="CHEBI:59789"/>
    </ligand>
</feature>
<feature type="binding site" evidence="1">
    <location>
        <position position="298"/>
    </location>
    <ligand>
        <name>S-adenosyl-L-methionine</name>
        <dbReference type="ChEBI" id="CHEBI:59789"/>
    </ligand>
</feature>
<feature type="binding site" evidence="1">
    <location>
        <position position="314"/>
    </location>
    <ligand>
        <name>S-adenosyl-L-methionine</name>
        <dbReference type="ChEBI" id="CHEBI:59789"/>
    </ligand>
</feature>
<feature type="binding site" evidence="1">
    <location>
        <position position="342"/>
    </location>
    <ligand>
        <name>S-adenosyl-L-methionine</name>
        <dbReference type="ChEBI" id="CHEBI:59789"/>
    </ligand>
</feature>
<feature type="binding site" evidence="1">
    <location>
        <position position="363"/>
    </location>
    <ligand>
        <name>S-adenosyl-L-methionine</name>
        <dbReference type="ChEBI" id="CHEBI:59789"/>
    </ligand>
</feature>
<keyword id="KW-0004">4Fe-4S</keyword>
<keyword id="KW-0408">Iron</keyword>
<keyword id="KW-0411">Iron-sulfur</keyword>
<keyword id="KW-0479">Metal-binding</keyword>
<keyword id="KW-0489">Methyltransferase</keyword>
<keyword id="KW-0698">rRNA processing</keyword>
<keyword id="KW-0949">S-adenosyl-L-methionine</keyword>
<keyword id="KW-0808">Transferase</keyword>
<sequence length="466" mass="51278">MVDVLNIESLDLEARGIAHRDGKVLFVEGALPGERVTVQTVRRKPSYEIAKVEEILRPSSQRVAPRCPHFGVCGGCAMQHLAPAAQVAIKQRALEDTFWHVGKLKPARILPPLYGPTWGYRYRARLSVRVVPKKGGVLVGFHERKSSYVADMRECHVLPPAVSRLLLPLRAMIAAMSAPDRMPQIEVALGDEAIVLVLRHLLPLTDGDIAVLRAFAAEHGVQWWLQSKGPDTVHPLEREHADALAYTLPEFGLRMPYRPTDFTQVNHAINRAMVSRALKLLDVQPQDRVADLFCGLGNFTLPLATQGREAVGVEGSKALTDRAHEAAARHGLGERTRFATLNLFEVDVQWLRGLGYFDRMLIDPPREGAQAVVQALSLLAPGERPRRIVYVSCNPGTLARDAAIMVHEGGYALRSAGVINMFPHTGHVESIAVFESLDEATVLQAQAQARQKAREEAERLAEAAAA</sequence>
<dbReference type="EC" id="2.1.1.190" evidence="1"/>
<dbReference type="EMBL" id="BX640432">
    <property type="protein sequence ID" value="CAE38338.1"/>
    <property type="status" value="ALT_INIT"/>
    <property type="molecule type" value="Genomic_DNA"/>
</dbReference>
<dbReference type="RefSeq" id="WP_041937249.1">
    <property type="nucleotide sequence ID" value="NC_002928.3"/>
</dbReference>
<dbReference type="SMR" id="Q7W676"/>
<dbReference type="GeneID" id="93204833"/>
<dbReference type="KEGG" id="bpa:BPP3051"/>
<dbReference type="HOGENOM" id="CLU_014689_8_2_4"/>
<dbReference type="Proteomes" id="UP000001421">
    <property type="component" value="Chromosome"/>
</dbReference>
<dbReference type="GO" id="GO:0051539">
    <property type="term" value="F:4 iron, 4 sulfur cluster binding"/>
    <property type="evidence" value="ECO:0007669"/>
    <property type="project" value="UniProtKB-KW"/>
</dbReference>
<dbReference type="GO" id="GO:0005506">
    <property type="term" value="F:iron ion binding"/>
    <property type="evidence" value="ECO:0007669"/>
    <property type="project" value="UniProtKB-UniRule"/>
</dbReference>
<dbReference type="GO" id="GO:0003723">
    <property type="term" value="F:RNA binding"/>
    <property type="evidence" value="ECO:0007669"/>
    <property type="project" value="InterPro"/>
</dbReference>
<dbReference type="GO" id="GO:0070041">
    <property type="term" value="F:rRNA (uridine-C5-)-methyltransferase activity"/>
    <property type="evidence" value="ECO:0007669"/>
    <property type="project" value="UniProtKB-UniRule"/>
</dbReference>
<dbReference type="GO" id="GO:0070475">
    <property type="term" value="P:rRNA base methylation"/>
    <property type="evidence" value="ECO:0007669"/>
    <property type="project" value="TreeGrafter"/>
</dbReference>
<dbReference type="CDD" id="cd02440">
    <property type="entry name" value="AdoMet_MTases"/>
    <property type="match status" value="1"/>
</dbReference>
<dbReference type="FunFam" id="2.40.50.140:FF:000097">
    <property type="entry name" value="23S rRNA (uracil(1939)-C(5))-methyltransferase RlmD"/>
    <property type="match status" value="1"/>
</dbReference>
<dbReference type="Gene3D" id="2.40.50.1070">
    <property type="match status" value="1"/>
</dbReference>
<dbReference type="Gene3D" id="2.40.50.140">
    <property type="entry name" value="Nucleic acid-binding proteins"/>
    <property type="match status" value="1"/>
</dbReference>
<dbReference type="Gene3D" id="3.40.50.150">
    <property type="entry name" value="Vaccinia Virus protein VP39"/>
    <property type="match status" value="1"/>
</dbReference>
<dbReference type="HAMAP" id="MF_01010">
    <property type="entry name" value="23SrRNA_methyltr_RlmD"/>
    <property type="match status" value="1"/>
</dbReference>
<dbReference type="InterPro" id="IPR001566">
    <property type="entry name" value="23S_rRNA_MeTrfase_RlmD"/>
</dbReference>
<dbReference type="InterPro" id="IPR030390">
    <property type="entry name" value="MeTrfase_TrmA_AS"/>
</dbReference>
<dbReference type="InterPro" id="IPR030391">
    <property type="entry name" value="MeTrfase_TrmA_CS"/>
</dbReference>
<dbReference type="InterPro" id="IPR012340">
    <property type="entry name" value="NA-bd_OB-fold"/>
</dbReference>
<dbReference type="InterPro" id="IPR029063">
    <property type="entry name" value="SAM-dependent_MTases_sf"/>
</dbReference>
<dbReference type="InterPro" id="IPR002792">
    <property type="entry name" value="TRAM_dom"/>
</dbReference>
<dbReference type="InterPro" id="IPR010280">
    <property type="entry name" value="U5_MeTrfase_fam"/>
</dbReference>
<dbReference type="NCBIfam" id="NF009639">
    <property type="entry name" value="PRK13168.1"/>
    <property type="match status" value="1"/>
</dbReference>
<dbReference type="NCBIfam" id="TIGR00479">
    <property type="entry name" value="rumA"/>
    <property type="match status" value="1"/>
</dbReference>
<dbReference type="PANTHER" id="PTHR11061:SF49">
    <property type="entry name" value="23S RRNA (URACIL(1939)-C(5))-METHYLTRANSFERASE RLMD"/>
    <property type="match status" value="1"/>
</dbReference>
<dbReference type="PANTHER" id="PTHR11061">
    <property type="entry name" value="RNA M5U METHYLTRANSFERASE"/>
    <property type="match status" value="1"/>
</dbReference>
<dbReference type="Pfam" id="PF01938">
    <property type="entry name" value="TRAM"/>
    <property type="match status" value="1"/>
</dbReference>
<dbReference type="Pfam" id="PF05958">
    <property type="entry name" value="tRNA_U5-meth_tr"/>
    <property type="match status" value="1"/>
</dbReference>
<dbReference type="SUPFAM" id="SSF50249">
    <property type="entry name" value="Nucleic acid-binding proteins"/>
    <property type="match status" value="1"/>
</dbReference>
<dbReference type="SUPFAM" id="SSF53335">
    <property type="entry name" value="S-adenosyl-L-methionine-dependent methyltransferases"/>
    <property type="match status" value="1"/>
</dbReference>
<dbReference type="PROSITE" id="PS51687">
    <property type="entry name" value="SAM_MT_RNA_M5U"/>
    <property type="match status" value="1"/>
</dbReference>
<dbReference type="PROSITE" id="PS50926">
    <property type="entry name" value="TRAM"/>
    <property type="match status" value="1"/>
</dbReference>
<dbReference type="PROSITE" id="PS01230">
    <property type="entry name" value="TRMA_1"/>
    <property type="match status" value="1"/>
</dbReference>
<dbReference type="PROSITE" id="PS01231">
    <property type="entry name" value="TRMA_2"/>
    <property type="match status" value="1"/>
</dbReference>
<proteinExistence type="inferred from homology"/>
<organism>
    <name type="scientific">Bordetella parapertussis (strain 12822 / ATCC BAA-587 / NCTC 13253)</name>
    <dbReference type="NCBI Taxonomy" id="257311"/>
    <lineage>
        <taxon>Bacteria</taxon>
        <taxon>Pseudomonadati</taxon>
        <taxon>Pseudomonadota</taxon>
        <taxon>Betaproteobacteria</taxon>
        <taxon>Burkholderiales</taxon>
        <taxon>Alcaligenaceae</taxon>
        <taxon>Bordetella</taxon>
    </lineage>
</organism>
<accession>Q7W676</accession>
<comment type="function">
    <text evidence="1">Catalyzes the formation of 5-methyl-uridine at position 1939 (m5U1939) in 23S rRNA.</text>
</comment>
<comment type="catalytic activity">
    <reaction evidence="1">
        <text>uridine(1939) in 23S rRNA + S-adenosyl-L-methionine = 5-methyluridine(1939) in 23S rRNA + S-adenosyl-L-homocysteine + H(+)</text>
        <dbReference type="Rhea" id="RHEA:42908"/>
        <dbReference type="Rhea" id="RHEA-COMP:10278"/>
        <dbReference type="Rhea" id="RHEA-COMP:10279"/>
        <dbReference type="ChEBI" id="CHEBI:15378"/>
        <dbReference type="ChEBI" id="CHEBI:57856"/>
        <dbReference type="ChEBI" id="CHEBI:59789"/>
        <dbReference type="ChEBI" id="CHEBI:65315"/>
        <dbReference type="ChEBI" id="CHEBI:74447"/>
        <dbReference type="EC" id="2.1.1.190"/>
    </reaction>
</comment>
<comment type="similarity">
    <text evidence="1">Belongs to the class I-like SAM-binding methyltransferase superfamily. RNA M5U methyltransferase family. RlmD subfamily.</text>
</comment>
<comment type="sequence caution" evidence="2">
    <conflict type="erroneous initiation">
        <sequence resource="EMBL-CDS" id="CAE38338"/>
    </conflict>
</comment>